<evidence type="ECO:0000250" key="1"/>
<evidence type="ECO:0000255" key="2"/>
<evidence type="ECO:0000255" key="3">
    <source>
        <dbReference type="PROSITE-ProRule" id="PRU00628"/>
    </source>
</evidence>
<evidence type="ECO:0000305" key="4"/>
<gene>
    <name type="primary">CMO</name>
</gene>
<reference key="1">
    <citation type="journal article" date="2001" name="Sheng Wu Gong Cheng Xue Bao">
        <title>Cloning and characterization of CMO gene from Atriplex hortensis.</title>
        <authorList>
            <person name="Shen Y.G."/>
            <person name="Du B.X."/>
            <person name="Zhang J.S."/>
            <person name="Chen S.Y."/>
        </authorList>
    </citation>
    <scope>NUCLEOTIDE SEQUENCE [MRNA]</scope>
</reference>
<feature type="transit peptide" description="Chloroplast" evidence="1">
    <location>
        <begin position="1"/>
        <end position="58"/>
    </location>
</feature>
<feature type="chain" id="PRO_0000020926" description="Choline monooxygenase, chloroplastic">
    <location>
        <begin position="59"/>
        <end position="438"/>
    </location>
</feature>
<feature type="domain" description="Rieske" evidence="3">
    <location>
        <begin position="121"/>
        <end position="228"/>
    </location>
</feature>
<feature type="binding site" evidence="3">
    <location>
        <position position="163"/>
    </location>
    <ligand>
        <name>[2Fe-2S] cluster</name>
        <dbReference type="ChEBI" id="CHEBI:190135"/>
    </ligand>
</feature>
<feature type="binding site" evidence="3">
    <location>
        <position position="165"/>
    </location>
    <ligand>
        <name>[2Fe-2S] cluster</name>
        <dbReference type="ChEBI" id="CHEBI:190135"/>
    </ligand>
</feature>
<feature type="binding site" evidence="3">
    <location>
        <position position="182"/>
    </location>
    <ligand>
        <name>[2Fe-2S] cluster</name>
        <dbReference type="ChEBI" id="CHEBI:190135"/>
    </ligand>
</feature>
<feature type="binding site" evidence="3">
    <location>
        <position position="185"/>
    </location>
    <ligand>
        <name>[2Fe-2S] cluster</name>
        <dbReference type="ChEBI" id="CHEBI:190135"/>
    </ligand>
</feature>
<feature type="binding site" evidence="2">
    <location>
        <position position="288"/>
    </location>
    <ligand>
        <name>Fe cation</name>
        <dbReference type="ChEBI" id="CHEBI:24875"/>
    </ligand>
</feature>
<feature type="binding site" evidence="2">
    <location>
        <position position="293"/>
    </location>
    <ligand>
        <name>Fe cation</name>
        <dbReference type="ChEBI" id="CHEBI:24875"/>
    </ligand>
</feature>
<comment type="function">
    <text>Catalyzes the first step of the osmoprotectant glycine betaine synthesis.</text>
</comment>
<comment type="catalytic activity">
    <reaction>
        <text>choline + 2 reduced [2Fe-2S]-[ferredoxin] + O2 + 2 H(+) = betaine aldehyde hydrate + 2 oxidized [2Fe-2S]-[ferredoxin] + H2O</text>
        <dbReference type="Rhea" id="RHEA:17769"/>
        <dbReference type="Rhea" id="RHEA-COMP:10000"/>
        <dbReference type="Rhea" id="RHEA-COMP:10001"/>
        <dbReference type="ChEBI" id="CHEBI:15354"/>
        <dbReference type="ChEBI" id="CHEBI:15377"/>
        <dbReference type="ChEBI" id="CHEBI:15378"/>
        <dbReference type="ChEBI" id="CHEBI:15379"/>
        <dbReference type="ChEBI" id="CHEBI:15870"/>
        <dbReference type="ChEBI" id="CHEBI:33737"/>
        <dbReference type="ChEBI" id="CHEBI:33738"/>
        <dbReference type="EC" id="1.14.15.7"/>
    </reaction>
</comment>
<comment type="cofactor">
    <cofactor>
        <name>[2Fe-2S] cluster</name>
        <dbReference type="ChEBI" id="CHEBI:190135"/>
    </cofactor>
    <text>Binds 1 [2Fe-2S] cluster.</text>
</comment>
<comment type="cofactor">
    <cofactor evidence="4">
        <name>Fe cation</name>
        <dbReference type="ChEBI" id="CHEBI:24875"/>
    </cofactor>
    <text evidence="4">Binds 1 Fe cation.</text>
</comment>
<comment type="cofactor">
    <cofactor evidence="1">
        <name>Mg(2+)</name>
        <dbReference type="ChEBI" id="CHEBI:18420"/>
    </cofactor>
</comment>
<comment type="pathway">
    <text>Amine and polyamine biosynthesis; betaine biosynthesis via choline pathway; betaine aldehyde from choline (monooxygenase route): step 1/1.</text>
</comment>
<comment type="subcellular location">
    <subcellularLocation>
        <location evidence="1">Plastid</location>
        <location evidence="1">Chloroplast stroma</location>
    </subcellularLocation>
</comment>
<comment type="tissue specificity">
    <text>Expressed in roots and leaves.</text>
</comment>
<comment type="induction">
    <text>By salt stress.</text>
</comment>
<comment type="similarity">
    <text evidence="4">Belongs to the choline monooxygenase family.</text>
</comment>
<name>CHMO_ATRHO</name>
<keyword id="KW-0001">2Fe-2S</keyword>
<keyword id="KW-0150">Chloroplast</keyword>
<keyword id="KW-0408">Iron</keyword>
<keyword id="KW-0411">Iron-sulfur</keyword>
<keyword id="KW-0460">Magnesium</keyword>
<keyword id="KW-0479">Metal-binding</keyword>
<keyword id="KW-0503">Monooxygenase</keyword>
<keyword id="KW-0560">Oxidoreductase</keyword>
<keyword id="KW-0934">Plastid</keyword>
<keyword id="KW-0346">Stress response</keyword>
<keyword id="KW-0809">Transit peptide</keyword>
<accession>Q9LKN0</accession>
<protein>
    <recommendedName>
        <fullName>Choline monooxygenase, chloroplastic</fullName>
        <ecNumber>1.14.15.7</ecNumber>
    </recommendedName>
</protein>
<dbReference type="EC" id="1.14.15.7"/>
<dbReference type="EMBL" id="AF270651">
    <property type="protein sequence ID" value="AAF76895.1"/>
    <property type="molecule type" value="mRNA"/>
</dbReference>
<dbReference type="SMR" id="Q9LKN0"/>
<dbReference type="BRENDA" id="1.14.15.7">
    <property type="organism ID" value="9991"/>
</dbReference>
<dbReference type="UniPathway" id="UPA00529">
    <property type="reaction ID" value="UER00430"/>
</dbReference>
<dbReference type="GO" id="GO:0009570">
    <property type="term" value="C:chloroplast stroma"/>
    <property type="evidence" value="ECO:0007669"/>
    <property type="project" value="UniProtKB-SubCell"/>
</dbReference>
<dbReference type="GO" id="GO:0051537">
    <property type="term" value="F:2 iron, 2 sulfur cluster binding"/>
    <property type="evidence" value="ECO:0007669"/>
    <property type="project" value="UniProtKB-KW"/>
</dbReference>
<dbReference type="GO" id="GO:0019133">
    <property type="term" value="F:choline monooxygenase activity"/>
    <property type="evidence" value="ECO:0007669"/>
    <property type="project" value="UniProtKB-EC"/>
</dbReference>
<dbReference type="GO" id="GO:0005506">
    <property type="term" value="F:iron ion binding"/>
    <property type="evidence" value="ECO:0007669"/>
    <property type="project" value="InterPro"/>
</dbReference>
<dbReference type="GO" id="GO:0019285">
    <property type="term" value="P:glycine betaine biosynthetic process from choline"/>
    <property type="evidence" value="ECO:0007669"/>
    <property type="project" value="UniProtKB-UniPathway"/>
</dbReference>
<dbReference type="CDD" id="cd08883">
    <property type="entry name" value="RHO_alpha_C_CMO-like"/>
    <property type="match status" value="1"/>
</dbReference>
<dbReference type="CDD" id="cd03541">
    <property type="entry name" value="Rieske_RO_Alpha_CMO"/>
    <property type="match status" value="1"/>
</dbReference>
<dbReference type="Gene3D" id="3.90.380.10">
    <property type="entry name" value="Naphthalene 1,2-dioxygenase Alpha Subunit, Chain A, domain 1"/>
    <property type="match status" value="1"/>
</dbReference>
<dbReference type="Gene3D" id="2.102.10.10">
    <property type="entry name" value="Rieske [2Fe-2S] iron-sulphur domain"/>
    <property type="match status" value="1"/>
</dbReference>
<dbReference type="InterPro" id="IPR017941">
    <property type="entry name" value="Rieske_2Fe-2S"/>
</dbReference>
<dbReference type="InterPro" id="IPR036922">
    <property type="entry name" value="Rieske_2Fe-2S_sf"/>
</dbReference>
<dbReference type="InterPro" id="IPR015879">
    <property type="entry name" value="Ring_hydroxy_dOase_asu_C_dom"/>
</dbReference>
<dbReference type="InterPro" id="IPR001663">
    <property type="entry name" value="Rng_hydr_dOase-A"/>
</dbReference>
<dbReference type="PANTHER" id="PTHR43756">
    <property type="entry name" value="CHOLINE MONOOXYGENASE, CHLOROPLASTIC"/>
    <property type="match status" value="1"/>
</dbReference>
<dbReference type="PANTHER" id="PTHR43756:SF5">
    <property type="entry name" value="CHOLINE MONOOXYGENASE, CHLOROPLASTIC"/>
    <property type="match status" value="1"/>
</dbReference>
<dbReference type="Pfam" id="PF00355">
    <property type="entry name" value="Rieske"/>
    <property type="match status" value="1"/>
</dbReference>
<dbReference type="Pfam" id="PF00848">
    <property type="entry name" value="Ring_hydroxyl_A"/>
    <property type="match status" value="1"/>
</dbReference>
<dbReference type="PRINTS" id="PR00090">
    <property type="entry name" value="RNGDIOXGNASE"/>
</dbReference>
<dbReference type="SUPFAM" id="SSF55961">
    <property type="entry name" value="Bet v1-like"/>
    <property type="match status" value="1"/>
</dbReference>
<dbReference type="SUPFAM" id="SSF50022">
    <property type="entry name" value="ISP domain"/>
    <property type="match status" value="1"/>
</dbReference>
<dbReference type="PROSITE" id="PS51296">
    <property type="entry name" value="RIESKE"/>
    <property type="match status" value="1"/>
</dbReference>
<sequence length="438" mass="48771">MAASATTMLLKYPTTVCGIPNSSANNSTDPSNNIVQIPQTTTTNSPLLKFRTPNKPVNAVAAPAFPSVTTTTTTTPSSIQSLVKDFDPLVPAEDALTPPSSWYTEPAFYAHELDRIFYKGWQVAGYSDQVKEANQYFTGTLGNVEYLVCRDGEGKVHAFHNVCTHRASILACGSGKKSCFVCPYHGWVYGMNGSLTKASKATPEQSLNPDELGLVPLKVAVWGPFILISLDRSSREVGDVGSEWLGSCAEDVKAHAFDPNLQFINRSEFPIESNWKIFSDNYLDSSYHVPYAHKYYATELDFDTYQTDMVGNVTIQRVAGTSNNGFNRLGTQAFYAFAYPNFAVERYGPWMTTMHIVPLGPRKCKLVVDYYIEKSKLDDKDYIEKGIAINDNVQKEDVVLCESVQKGLETPAYRSGRYVMPIEKGIHHFHCWLHQVLK</sequence>
<proteinExistence type="evidence at transcript level"/>
<organism>
    <name type="scientific">Atriplex hortensis</name>
    <name type="common">Mountain spinach</name>
    <dbReference type="NCBI Taxonomy" id="34272"/>
    <lineage>
        <taxon>Eukaryota</taxon>
        <taxon>Viridiplantae</taxon>
        <taxon>Streptophyta</taxon>
        <taxon>Embryophyta</taxon>
        <taxon>Tracheophyta</taxon>
        <taxon>Spermatophyta</taxon>
        <taxon>Magnoliopsida</taxon>
        <taxon>eudicotyledons</taxon>
        <taxon>Gunneridae</taxon>
        <taxon>Pentapetalae</taxon>
        <taxon>Caryophyllales</taxon>
        <taxon>Chenopodiaceae</taxon>
        <taxon>Chenopodioideae</taxon>
        <taxon>Atripliceae</taxon>
        <taxon>Atriplex</taxon>
    </lineage>
</organism>